<sequence length="295" mass="30902">MSLGALISESRNPATMELDKLSTLAMLTCINDEDRKVPDAIRLVLPAVAQAVDLAADALKQGGRLIYLGAGTSGRLGVLDASECPPTFGVPHGMVIGLIAGGPGALLKAVEGAEDDIALGMRDLQDLQLTATDMVVGLAASGRTPYVIGALRYARELGCPTAAISCNPDSPIAQEAQVAISPVVGPEALTGSTRMKSGTAQKLVLNMLSTGAMVKLGKVYQNLMVDVKATNVKLVDRACRIVVEATGVSRAEAEHALRQTDFEVKPAILMLLKGVSAEQARQDLRQHHGYLRAAL</sequence>
<dbReference type="EC" id="4.2.1.126" evidence="1"/>
<dbReference type="EMBL" id="AL590842">
    <property type="protein sequence ID" value="CAL21533.1"/>
    <property type="molecule type" value="Genomic_DNA"/>
</dbReference>
<dbReference type="EMBL" id="AE009952">
    <property type="protein sequence ID" value="AAM84879.1"/>
    <property type="molecule type" value="Genomic_DNA"/>
</dbReference>
<dbReference type="EMBL" id="AE017042">
    <property type="protein sequence ID" value="AAS62729.1"/>
    <property type="molecule type" value="Genomic_DNA"/>
</dbReference>
<dbReference type="PIR" id="AB0356">
    <property type="entry name" value="AB0356"/>
</dbReference>
<dbReference type="RefSeq" id="WP_002211565.1">
    <property type="nucleotide sequence ID" value="NZ_WUCM01000103.1"/>
</dbReference>
<dbReference type="RefSeq" id="YP_002347855.1">
    <property type="nucleotide sequence ID" value="NC_003143.1"/>
</dbReference>
<dbReference type="SMR" id="Q8ZCP8"/>
<dbReference type="STRING" id="214092.YPO2925"/>
<dbReference type="PaxDb" id="214092-YPO2925"/>
<dbReference type="DNASU" id="1146252"/>
<dbReference type="EnsemblBacteria" id="AAS62729">
    <property type="protein sequence ID" value="AAS62729"/>
    <property type="gene ID" value="YP_2532"/>
</dbReference>
<dbReference type="GeneID" id="57975879"/>
<dbReference type="KEGG" id="ype:YPO2925"/>
<dbReference type="KEGG" id="ypk:y1305"/>
<dbReference type="KEGG" id="ypm:YP_2532"/>
<dbReference type="PATRIC" id="fig|214092.21.peg.3376"/>
<dbReference type="eggNOG" id="COG2103">
    <property type="taxonomic scope" value="Bacteria"/>
</dbReference>
<dbReference type="HOGENOM" id="CLU_049049_1_1_6"/>
<dbReference type="OMA" id="MDAVECP"/>
<dbReference type="OrthoDB" id="9813395at2"/>
<dbReference type="UniPathway" id="UPA00342"/>
<dbReference type="UniPathway" id="UPA00343"/>
<dbReference type="UniPathway" id="UPA00544"/>
<dbReference type="Proteomes" id="UP000000815">
    <property type="component" value="Chromosome"/>
</dbReference>
<dbReference type="Proteomes" id="UP000001019">
    <property type="component" value="Chromosome"/>
</dbReference>
<dbReference type="Proteomes" id="UP000002490">
    <property type="component" value="Chromosome"/>
</dbReference>
<dbReference type="GO" id="GO:0097367">
    <property type="term" value="F:carbohydrate derivative binding"/>
    <property type="evidence" value="ECO:0007669"/>
    <property type="project" value="InterPro"/>
</dbReference>
<dbReference type="GO" id="GO:0016835">
    <property type="term" value="F:carbon-oxygen lyase activity"/>
    <property type="evidence" value="ECO:0000318"/>
    <property type="project" value="GO_Central"/>
</dbReference>
<dbReference type="GO" id="GO:0016803">
    <property type="term" value="F:ether hydrolase activity"/>
    <property type="evidence" value="ECO:0000318"/>
    <property type="project" value="GO_Central"/>
</dbReference>
<dbReference type="GO" id="GO:0097175">
    <property type="term" value="P:1,6-anhydro-N-acetyl-beta-muramic acid catabolic process"/>
    <property type="evidence" value="ECO:0007669"/>
    <property type="project" value="UniProtKB-UniRule"/>
</dbReference>
<dbReference type="GO" id="GO:0046348">
    <property type="term" value="P:amino sugar catabolic process"/>
    <property type="evidence" value="ECO:0000318"/>
    <property type="project" value="GO_Central"/>
</dbReference>
<dbReference type="GO" id="GO:0097173">
    <property type="term" value="P:N-acetylmuramic acid catabolic process"/>
    <property type="evidence" value="ECO:0007669"/>
    <property type="project" value="UniProtKB-UniPathway"/>
</dbReference>
<dbReference type="GO" id="GO:0009254">
    <property type="term" value="P:peptidoglycan turnover"/>
    <property type="evidence" value="ECO:0000318"/>
    <property type="project" value="GO_Central"/>
</dbReference>
<dbReference type="CDD" id="cd05007">
    <property type="entry name" value="SIS_Etherase"/>
    <property type="match status" value="1"/>
</dbReference>
<dbReference type="FunFam" id="1.10.8.1080:FF:000001">
    <property type="entry name" value="N-acetylmuramic acid 6-phosphate etherase"/>
    <property type="match status" value="1"/>
</dbReference>
<dbReference type="FunFam" id="3.40.50.10490:FF:000014">
    <property type="entry name" value="N-acetylmuramic acid 6-phosphate etherase"/>
    <property type="match status" value="1"/>
</dbReference>
<dbReference type="Gene3D" id="1.10.8.1080">
    <property type="match status" value="1"/>
</dbReference>
<dbReference type="Gene3D" id="3.40.50.10490">
    <property type="entry name" value="Glucose-6-phosphate isomerase like protein, domain 1"/>
    <property type="match status" value="1"/>
</dbReference>
<dbReference type="HAMAP" id="MF_00068">
    <property type="entry name" value="MurQ"/>
    <property type="match status" value="1"/>
</dbReference>
<dbReference type="InterPro" id="IPR005488">
    <property type="entry name" value="Etherase_MurQ"/>
</dbReference>
<dbReference type="InterPro" id="IPR005486">
    <property type="entry name" value="Glucokinase_regulatory_CS"/>
</dbReference>
<dbReference type="InterPro" id="IPR040190">
    <property type="entry name" value="MURQ/GCKR"/>
</dbReference>
<dbReference type="InterPro" id="IPR001347">
    <property type="entry name" value="SIS_dom"/>
</dbReference>
<dbReference type="InterPro" id="IPR046348">
    <property type="entry name" value="SIS_dom_sf"/>
</dbReference>
<dbReference type="InterPro" id="IPR009060">
    <property type="entry name" value="UBA-like_sf"/>
</dbReference>
<dbReference type="NCBIfam" id="TIGR00274">
    <property type="entry name" value="N-acetylmuramic acid 6-phosphate etherase"/>
    <property type="match status" value="1"/>
</dbReference>
<dbReference type="NCBIfam" id="NF003915">
    <property type="entry name" value="PRK05441.1"/>
    <property type="match status" value="1"/>
</dbReference>
<dbReference type="NCBIfam" id="NF009222">
    <property type="entry name" value="PRK12570.1"/>
    <property type="match status" value="1"/>
</dbReference>
<dbReference type="PANTHER" id="PTHR10088">
    <property type="entry name" value="GLUCOKINASE REGULATORY PROTEIN"/>
    <property type="match status" value="1"/>
</dbReference>
<dbReference type="PANTHER" id="PTHR10088:SF5">
    <property type="entry name" value="N-ACETYLMURAMIC ACID 6-PHOSPHATE ETHERASE"/>
    <property type="match status" value="1"/>
</dbReference>
<dbReference type="Pfam" id="PF20741">
    <property type="entry name" value="GKRP-like_C"/>
    <property type="match status" value="1"/>
</dbReference>
<dbReference type="Pfam" id="PF22645">
    <property type="entry name" value="GKRP_SIS_N"/>
    <property type="match status" value="1"/>
</dbReference>
<dbReference type="SUPFAM" id="SSF53697">
    <property type="entry name" value="SIS domain"/>
    <property type="match status" value="1"/>
</dbReference>
<dbReference type="SUPFAM" id="SSF46934">
    <property type="entry name" value="UBA-like"/>
    <property type="match status" value="1"/>
</dbReference>
<dbReference type="PROSITE" id="PS01272">
    <property type="entry name" value="GCKR"/>
    <property type="match status" value="1"/>
</dbReference>
<dbReference type="PROSITE" id="PS51464">
    <property type="entry name" value="SIS"/>
    <property type="match status" value="1"/>
</dbReference>
<keyword id="KW-0119">Carbohydrate metabolism</keyword>
<keyword id="KW-0456">Lyase</keyword>
<keyword id="KW-1185">Reference proteome</keyword>
<name>MURQ_YERPE</name>
<reference key="1">
    <citation type="journal article" date="2001" name="Nature">
        <title>Genome sequence of Yersinia pestis, the causative agent of plague.</title>
        <authorList>
            <person name="Parkhill J."/>
            <person name="Wren B.W."/>
            <person name="Thomson N.R."/>
            <person name="Titball R.W."/>
            <person name="Holden M.T.G."/>
            <person name="Prentice M.B."/>
            <person name="Sebaihia M."/>
            <person name="James K.D."/>
            <person name="Churcher C.M."/>
            <person name="Mungall K.L."/>
            <person name="Baker S."/>
            <person name="Basham D."/>
            <person name="Bentley S.D."/>
            <person name="Brooks K."/>
            <person name="Cerdeno-Tarraga A.-M."/>
            <person name="Chillingworth T."/>
            <person name="Cronin A."/>
            <person name="Davies R.M."/>
            <person name="Davis P."/>
            <person name="Dougan G."/>
            <person name="Feltwell T."/>
            <person name="Hamlin N."/>
            <person name="Holroyd S."/>
            <person name="Jagels K."/>
            <person name="Karlyshev A.V."/>
            <person name="Leather S."/>
            <person name="Moule S."/>
            <person name="Oyston P.C.F."/>
            <person name="Quail M.A."/>
            <person name="Rutherford K.M."/>
            <person name="Simmonds M."/>
            <person name="Skelton J."/>
            <person name="Stevens K."/>
            <person name="Whitehead S."/>
            <person name="Barrell B.G."/>
        </authorList>
    </citation>
    <scope>NUCLEOTIDE SEQUENCE [LARGE SCALE GENOMIC DNA]</scope>
    <source>
        <strain>CO-92 / Biovar Orientalis</strain>
    </source>
</reference>
<reference key="2">
    <citation type="journal article" date="2002" name="J. Bacteriol.">
        <title>Genome sequence of Yersinia pestis KIM.</title>
        <authorList>
            <person name="Deng W."/>
            <person name="Burland V."/>
            <person name="Plunkett G. III"/>
            <person name="Boutin A."/>
            <person name="Mayhew G.F."/>
            <person name="Liss P."/>
            <person name="Perna N.T."/>
            <person name="Rose D.J."/>
            <person name="Mau B."/>
            <person name="Zhou S."/>
            <person name="Schwartz D.C."/>
            <person name="Fetherston J.D."/>
            <person name="Lindler L.E."/>
            <person name="Brubaker R.R."/>
            <person name="Plano G.V."/>
            <person name="Straley S.C."/>
            <person name="McDonough K.A."/>
            <person name="Nilles M.L."/>
            <person name="Matson J.S."/>
            <person name="Blattner F.R."/>
            <person name="Perry R.D."/>
        </authorList>
    </citation>
    <scope>NUCLEOTIDE SEQUENCE [LARGE SCALE GENOMIC DNA]</scope>
    <source>
        <strain>KIM10+ / Biovar Mediaevalis</strain>
    </source>
</reference>
<reference key="3">
    <citation type="journal article" date="2004" name="DNA Res.">
        <title>Complete genome sequence of Yersinia pestis strain 91001, an isolate avirulent to humans.</title>
        <authorList>
            <person name="Song Y."/>
            <person name="Tong Z."/>
            <person name="Wang J."/>
            <person name="Wang L."/>
            <person name="Guo Z."/>
            <person name="Han Y."/>
            <person name="Zhang J."/>
            <person name="Pei D."/>
            <person name="Zhou D."/>
            <person name="Qin H."/>
            <person name="Pang X."/>
            <person name="Han Y."/>
            <person name="Zhai J."/>
            <person name="Li M."/>
            <person name="Cui B."/>
            <person name="Qi Z."/>
            <person name="Jin L."/>
            <person name="Dai R."/>
            <person name="Chen F."/>
            <person name="Li S."/>
            <person name="Ye C."/>
            <person name="Du Z."/>
            <person name="Lin W."/>
            <person name="Wang J."/>
            <person name="Yu J."/>
            <person name="Yang H."/>
            <person name="Wang J."/>
            <person name="Huang P."/>
            <person name="Yang R."/>
        </authorList>
    </citation>
    <scope>NUCLEOTIDE SEQUENCE [LARGE SCALE GENOMIC DNA]</scope>
    <source>
        <strain>91001 / Biovar Mediaevalis</strain>
    </source>
</reference>
<accession>Q8ZCP8</accession>
<accession>Q0WCY3</accession>
<protein>
    <recommendedName>
        <fullName evidence="1">N-acetylmuramic acid 6-phosphate etherase</fullName>
        <shortName evidence="1">MurNAc-6-P etherase</shortName>
        <ecNumber evidence="1">4.2.1.126</ecNumber>
    </recommendedName>
    <alternativeName>
        <fullName evidence="1">N-acetylmuramic acid 6-phosphate hydrolase</fullName>
    </alternativeName>
    <alternativeName>
        <fullName evidence="1">N-acetylmuramic acid 6-phosphate lyase</fullName>
    </alternativeName>
</protein>
<organism>
    <name type="scientific">Yersinia pestis</name>
    <dbReference type="NCBI Taxonomy" id="632"/>
    <lineage>
        <taxon>Bacteria</taxon>
        <taxon>Pseudomonadati</taxon>
        <taxon>Pseudomonadota</taxon>
        <taxon>Gammaproteobacteria</taxon>
        <taxon>Enterobacterales</taxon>
        <taxon>Yersiniaceae</taxon>
        <taxon>Yersinia</taxon>
    </lineage>
</organism>
<proteinExistence type="inferred from homology"/>
<feature type="chain" id="PRO_0000214846" description="N-acetylmuramic acid 6-phosphate etherase">
    <location>
        <begin position="1"/>
        <end position="295"/>
    </location>
</feature>
<feature type="domain" description="SIS" evidence="1">
    <location>
        <begin position="55"/>
        <end position="218"/>
    </location>
</feature>
<feature type="active site" description="Proton donor" evidence="1">
    <location>
        <position position="83"/>
    </location>
</feature>
<feature type="active site" evidence="1">
    <location>
        <position position="114"/>
    </location>
</feature>
<comment type="function">
    <text evidence="1">Specifically catalyzes the cleavage of the D-lactyl ether substituent of MurNAc 6-phosphate, producing GlcNAc 6-phosphate and D-lactate. Together with AnmK, is also required for the utilization of anhydro-N-acetylmuramic acid (anhMurNAc) either imported from the medium or derived from its own cell wall murein, and thus plays a role in cell wall recycling.</text>
</comment>
<comment type="catalytic activity">
    <reaction evidence="1">
        <text>N-acetyl-D-muramate 6-phosphate + H2O = N-acetyl-D-glucosamine 6-phosphate + (R)-lactate</text>
        <dbReference type="Rhea" id="RHEA:26410"/>
        <dbReference type="ChEBI" id="CHEBI:15377"/>
        <dbReference type="ChEBI" id="CHEBI:16004"/>
        <dbReference type="ChEBI" id="CHEBI:57513"/>
        <dbReference type="ChEBI" id="CHEBI:58722"/>
        <dbReference type="EC" id="4.2.1.126"/>
    </reaction>
</comment>
<comment type="pathway">
    <text evidence="1">Amino-sugar metabolism; 1,6-anhydro-N-acetylmuramate degradation.</text>
</comment>
<comment type="pathway">
    <text evidence="1">Amino-sugar metabolism; N-acetylmuramate degradation.</text>
</comment>
<comment type="pathway">
    <text evidence="1">Cell wall biogenesis; peptidoglycan recycling.</text>
</comment>
<comment type="subunit">
    <text evidence="1">Homodimer.</text>
</comment>
<comment type="induction">
    <text evidence="1">Induced by MurNAc 6-phosphate that releases the repressor MurR from the DNA. Repressed by MurR in the absence of MurNAc 6-phosphate.</text>
</comment>
<comment type="miscellaneous">
    <text evidence="1">A lyase-type mechanism (elimination/hydration) is suggested for the cleavage of the lactyl ether bond of MurNAc 6-phosphate, with the formation of an alpha,beta-unsaturated aldehyde intermediate with (E)-stereochemistry, followed by the syn addition of water to give product.</text>
</comment>
<comment type="similarity">
    <text evidence="1">Belongs to the GCKR-like family. MurNAc-6-P etherase subfamily.</text>
</comment>
<evidence type="ECO:0000255" key="1">
    <source>
        <dbReference type="HAMAP-Rule" id="MF_00068"/>
    </source>
</evidence>
<gene>
    <name evidence="1" type="primary">murQ</name>
    <name type="ordered locus">YPO2925</name>
    <name type="ordered locus">y1305</name>
    <name type="ordered locus">YP_2532</name>
</gene>